<proteinExistence type="inferred from homology"/>
<sequence>MIQVRNLKKTFIKDGNRIEVLRGLDLKIEDGTSLAILGVSGAGKTTFVHILGTLDHPTSGEVLFNGLDVFNWPEKKLASFRNRTIGFVFQFHNLLPEFSSLENTMMPALISGMPRRNALERAETLLHDVGLGDRMTHKPSELSGGEQQRVAVARALVMEPEILLADEPTGNLDTETGRKIEDILLELNRQKGITLIVVTHNQSLAGRMSRSIGLRDGEIVTCA</sequence>
<evidence type="ECO:0000255" key="1">
    <source>
        <dbReference type="HAMAP-Rule" id="MF_01708"/>
    </source>
</evidence>
<keyword id="KW-0067">ATP-binding</keyword>
<keyword id="KW-0997">Cell inner membrane</keyword>
<keyword id="KW-1003">Cell membrane</keyword>
<keyword id="KW-0472">Membrane</keyword>
<keyword id="KW-0547">Nucleotide-binding</keyword>
<keyword id="KW-1185">Reference proteome</keyword>
<keyword id="KW-1278">Translocase</keyword>
<keyword id="KW-0813">Transport</keyword>
<comment type="function">
    <text evidence="1">Part of the ABC transporter complex LolCDE involved in the translocation of mature outer membrane-directed lipoproteins, from the inner membrane to the periplasmic chaperone, LolA. Responsible for the formation of the LolA-lipoprotein complex in an ATP-dependent manner.</text>
</comment>
<comment type="subunit">
    <text evidence="1">The complex is composed of two ATP-binding proteins (LolD) and two transmembrane proteins (LolC and LolE).</text>
</comment>
<comment type="subcellular location">
    <subcellularLocation>
        <location evidence="1">Cell inner membrane</location>
        <topology evidence="1">Peripheral membrane protein</topology>
    </subcellularLocation>
</comment>
<comment type="similarity">
    <text evidence="1">Belongs to the ABC transporter superfamily. Lipoprotein translocase (TC 3.A.1.125) family.</text>
</comment>
<feature type="chain" id="PRO_0000272160" description="Lipoprotein-releasing system ATP-binding protein LolD">
    <location>
        <begin position="1"/>
        <end position="223"/>
    </location>
</feature>
<feature type="domain" description="ABC transporter" evidence="1">
    <location>
        <begin position="2"/>
        <end position="223"/>
    </location>
</feature>
<feature type="binding site" evidence="1">
    <location>
        <begin position="38"/>
        <end position="45"/>
    </location>
    <ligand>
        <name>ATP</name>
        <dbReference type="ChEBI" id="CHEBI:30616"/>
    </ligand>
</feature>
<dbReference type="EC" id="7.6.2.-" evidence="1"/>
<dbReference type="EMBL" id="CP000252">
    <property type="protein sequence ID" value="ABC78130.1"/>
    <property type="molecule type" value="Genomic_DNA"/>
</dbReference>
<dbReference type="RefSeq" id="WP_011418150.1">
    <property type="nucleotide sequence ID" value="NC_007759.1"/>
</dbReference>
<dbReference type="SMR" id="Q2LVM2"/>
<dbReference type="FunCoup" id="Q2LVM2">
    <property type="interactions" value="295"/>
</dbReference>
<dbReference type="STRING" id="56780.SYN_00922"/>
<dbReference type="KEGG" id="sat:SYN_00922"/>
<dbReference type="eggNOG" id="COG1136">
    <property type="taxonomic scope" value="Bacteria"/>
</dbReference>
<dbReference type="HOGENOM" id="CLU_000604_1_22_7"/>
<dbReference type="InParanoid" id="Q2LVM2"/>
<dbReference type="OrthoDB" id="9809450at2"/>
<dbReference type="Proteomes" id="UP000001933">
    <property type="component" value="Chromosome"/>
</dbReference>
<dbReference type="GO" id="GO:0005886">
    <property type="term" value="C:plasma membrane"/>
    <property type="evidence" value="ECO:0007669"/>
    <property type="project" value="UniProtKB-SubCell"/>
</dbReference>
<dbReference type="GO" id="GO:0005524">
    <property type="term" value="F:ATP binding"/>
    <property type="evidence" value="ECO:0007669"/>
    <property type="project" value="UniProtKB-KW"/>
</dbReference>
<dbReference type="GO" id="GO:0016887">
    <property type="term" value="F:ATP hydrolysis activity"/>
    <property type="evidence" value="ECO:0007669"/>
    <property type="project" value="InterPro"/>
</dbReference>
<dbReference type="GO" id="GO:0022857">
    <property type="term" value="F:transmembrane transporter activity"/>
    <property type="evidence" value="ECO:0007669"/>
    <property type="project" value="TreeGrafter"/>
</dbReference>
<dbReference type="GO" id="GO:0044874">
    <property type="term" value="P:lipoprotein localization to outer membrane"/>
    <property type="evidence" value="ECO:0007669"/>
    <property type="project" value="TreeGrafter"/>
</dbReference>
<dbReference type="GO" id="GO:0089705">
    <property type="term" value="P:protein localization to outer membrane"/>
    <property type="evidence" value="ECO:0007669"/>
    <property type="project" value="TreeGrafter"/>
</dbReference>
<dbReference type="CDD" id="cd03255">
    <property type="entry name" value="ABC_MJ0796_LolCDE_FtsE"/>
    <property type="match status" value="1"/>
</dbReference>
<dbReference type="FunFam" id="3.40.50.300:FF:000032">
    <property type="entry name" value="Export ABC transporter ATP-binding protein"/>
    <property type="match status" value="1"/>
</dbReference>
<dbReference type="Gene3D" id="3.40.50.300">
    <property type="entry name" value="P-loop containing nucleotide triphosphate hydrolases"/>
    <property type="match status" value="1"/>
</dbReference>
<dbReference type="InterPro" id="IPR003593">
    <property type="entry name" value="AAA+_ATPase"/>
</dbReference>
<dbReference type="InterPro" id="IPR003439">
    <property type="entry name" value="ABC_transporter-like_ATP-bd"/>
</dbReference>
<dbReference type="InterPro" id="IPR017871">
    <property type="entry name" value="ABC_transporter-like_CS"/>
</dbReference>
<dbReference type="InterPro" id="IPR015854">
    <property type="entry name" value="ABC_transpr_LolD-like"/>
</dbReference>
<dbReference type="InterPro" id="IPR017911">
    <property type="entry name" value="MacB-like_ATP-bd"/>
</dbReference>
<dbReference type="InterPro" id="IPR027417">
    <property type="entry name" value="P-loop_NTPase"/>
</dbReference>
<dbReference type="PANTHER" id="PTHR24220">
    <property type="entry name" value="IMPORT ATP-BINDING PROTEIN"/>
    <property type="match status" value="1"/>
</dbReference>
<dbReference type="PANTHER" id="PTHR24220:SF689">
    <property type="entry name" value="LIPOPROTEIN-RELEASING SYSTEM ATP-BINDING PROTEIN LOLD"/>
    <property type="match status" value="1"/>
</dbReference>
<dbReference type="Pfam" id="PF00005">
    <property type="entry name" value="ABC_tran"/>
    <property type="match status" value="1"/>
</dbReference>
<dbReference type="SMART" id="SM00382">
    <property type="entry name" value="AAA"/>
    <property type="match status" value="1"/>
</dbReference>
<dbReference type="SUPFAM" id="SSF52540">
    <property type="entry name" value="P-loop containing nucleoside triphosphate hydrolases"/>
    <property type="match status" value="1"/>
</dbReference>
<dbReference type="PROSITE" id="PS00211">
    <property type="entry name" value="ABC_TRANSPORTER_1"/>
    <property type="match status" value="1"/>
</dbReference>
<dbReference type="PROSITE" id="PS50893">
    <property type="entry name" value="ABC_TRANSPORTER_2"/>
    <property type="match status" value="1"/>
</dbReference>
<dbReference type="PROSITE" id="PS51244">
    <property type="entry name" value="LOLD"/>
    <property type="match status" value="1"/>
</dbReference>
<accession>Q2LVM2</accession>
<gene>
    <name evidence="1" type="primary">lolD</name>
    <name type="ordered locus">SYNAS_22510</name>
    <name type="ORF">SYN_00922</name>
</gene>
<reference key="1">
    <citation type="journal article" date="2007" name="Proc. Natl. Acad. Sci. U.S.A.">
        <title>The genome of Syntrophus aciditrophicus: life at the thermodynamic limit of microbial growth.</title>
        <authorList>
            <person name="McInerney M.J."/>
            <person name="Rohlin L."/>
            <person name="Mouttaki H."/>
            <person name="Kim U."/>
            <person name="Krupp R.S."/>
            <person name="Rios-Hernandez L."/>
            <person name="Sieber J."/>
            <person name="Struchtemeyer C.G."/>
            <person name="Bhattacharyya A."/>
            <person name="Campbell J.W."/>
            <person name="Gunsalus R.P."/>
        </authorList>
    </citation>
    <scope>NUCLEOTIDE SEQUENCE [LARGE SCALE GENOMIC DNA]</scope>
    <source>
        <strain>SB</strain>
    </source>
</reference>
<name>LOLD_SYNAS</name>
<organism>
    <name type="scientific">Syntrophus aciditrophicus (strain SB)</name>
    <dbReference type="NCBI Taxonomy" id="56780"/>
    <lineage>
        <taxon>Bacteria</taxon>
        <taxon>Pseudomonadati</taxon>
        <taxon>Thermodesulfobacteriota</taxon>
        <taxon>Syntrophia</taxon>
        <taxon>Syntrophales</taxon>
        <taxon>Syntrophaceae</taxon>
        <taxon>Syntrophus</taxon>
    </lineage>
</organism>
<protein>
    <recommendedName>
        <fullName evidence="1">Lipoprotein-releasing system ATP-binding protein LolD</fullName>
        <ecNumber evidence="1">7.6.2.-</ecNumber>
    </recommendedName>
</protein>